<comment type="function">
    <text evidence="1">NDH-1 shuttles electrons from an unknown electron donor, via FMN and iron-sulfur (Fe-S) centers, to quinones in the respiratory and/or the photosynthetic chain. The immediate electron acceptor for the enzyme in this species is believed to be plastoquinone. Couples the redox reaction to proton translocation, and thus conserves the redox energy in a proton gradient (By similarity).</text>
</comment>
<comment type="catalytic activity">
    <reaction>
        <text>a plastoquinone + NADH + (n+1) H(+)(in) = a plastoquinol + NAD(+) + n H(+)(out)</text>
        <dbReference type="Rhea" id="RHEA:42608"/>
        <dbReference type="Rhea" id="RHEA-COMP:9561"/>
        <dbReference type="Rhea" id="RHEA-COMP:9562"/>
        <dbReference type="ChEBI" id="CHEBI:15378"/>
        <dbReference type="ChEBI" id="CHEBI:17757"/>
        <dbReference type="ChEBI" id="CHEBI:57540"/>
        <dbReference type="ChEBI" id="CHEBI:57945"/>
        <dbReference type="ChEBI" id="CHEBI:62192"/>
    </reaction>
</comment>
<comment type="catalytic activity">
    <reaction>
        <text>a plastoquinone + NADPH + (n+1) H(+)(in) = a plastoquinol + NADP(+) + n H(+)(out)</text>
        <dbReference type="Rhea" id="RHEA:42612"/>
        <dbReference type="Rhea" id="RHEA-COMP:9561"/>
        <dbReference type="Rhea" id="RHEA-COMP:9562"/>
        <dbReference type="ChEBI" id="CHEBI:15378"/>
        <dbReference type="ChEBI" id="CHEBI:17757"/>
        <dbReference type="ChEBI" id="CHEBI:57783"/>
        <dbReference type="ChEBI" id="CHEBI:58349"/>
        <dbReference type="ChEBI" id="CHEBI:62192"/>
    </reaction>
</comment>
<comment type="cofactor">
    <cofactor evidence="1">
        <name>[4Fe-4S] cluster</name>
        <dbReference type="ChEBI" id="CHEBI:49883"/>
    </cofactor>
    <text evidence="1">Binds 2 [4Fe-4S] clusters per subunit.</text>
</comment>
<comment type="subunit">
    <text evidence="1">NDH-1 is composed of at least 11 different subunits.</text>
</comment>
<comment type="subcellular location">
    <subcellularLocation>
        <location evidence="1">Cellular thylakoid membrane</location>
        <topology evidence="1">Peripheral membrane protein</topology>
    </subcellularLocation>
</comment>
<comment type="similarity">
    <text evidence="3">Belongs to the complex I 23 kDa subunit family.</text>
</comment>
<dbReference type="EC" id="7.1.1.-"/>
<dbReference type="EMBL" id="D01014">
    <property type="protein sequence ID" value="BAA00815.1"/>
    <property type="molecule type" value="Genomic_DNA"/>
</dbReference>
<dbReference type="PIR" id="JQ2136">
    <property type="entry name" value="JQ2136"/>
</dbReference>
<dbReference type="SMR" id="Q00236"/>
<dbReference type="GO" id="GO:0031676">
    <property type="term" value="C:plasma membrane-derived thylakoid membrane"/>
    <property type="evidence" value="ECO:0007669"/>
    <property type="project" value="UniProtKB-SubCell"/>
</dbReference>
<dbReference type="GO" id="GO:0051539">
    <property type="term" value="F:4 iron, 4 sulfur cluster binding"/>
    <property type="evidence" value="ECO:0007669"/>
    <property type="project" value="UniProtKB-KW"/>
</dbReference>
<dbReference type="GO" id="GO:0005506">
    <property type="term" value="F:iron ion binding"/>
    <property type="evidence" value="ECO:0007669"/>
    <property type="project" value="UniProtKB-UniRule"/>
</dbReference>
<dbReference type="GO" id="GO:0008137">
    <property type="term" value="F:NADH dehydrogenase (ubiquinone) activity"/>
    <property type="evidence" value="ECO:0007669"/>
    <property type="project" value="InterPro"/>
</dbReference>
<dbReference type="GO" id="GO:0048038">
    <property type="term" value="F:quinone binding"/>
    <property type="evidence" value="ECO:0007669"/>
    <property type="project" value="UniProtKB-KW"/>
</dbReference>
<dbReference type="GO" id="GO:0019684">
    <property type="term" value="P:photosynthesis, light reaction"/>
    <property type="evidence" value="ECO:0007669"/>
    <property type="project" value="UniProtKB-UniRule"/>
</dbReference>
<dbReference type="Gene3D" id="3.30.70.3270">
    <property type="match status" value="1"/>
</dbReference>
<dbReference type="HAMAP" id="MF_01351">
    <property type="entry name" value="NDH1_NuoI"/>
    <property type="match status" value="1"/>
</dbReference>
<dbReference type="InterPro" id="IPR017896">
    <property type="entry name" value="4Fe4S_Fe-S-bd"/>
</dbReference>
<dbReference type="InterPro" id="IPR017900">
    <property type="entry name" value="4Fe4S_Fe_S_CS"/>
</dbReference>
<dbReference type="InterPro" id="IPR010226">
    <property type="entry name" value="NADH_quinone_OxRdtase_chainI"/>
</dbReference>
<dbReference type="InterPro" id="IPR004497">
    <property type="entry name" value="NDHI"/>
</dbReference>
<dbReference type="NCBIfam" id="TIGR00403">
    <property type="entry name" value="ndhI"/>
    <property type="match status" value="1"/>
</dbReference>
<dbReference type="NCBIfam" id="TIGR01971">
    <property type="entry name" value="NuoI"/>
    <property type="match status" value="1"/>
</dbReference>
<dbReference type="NCBIfam" id="NF004537">
    <property type="entry name" value="PRK05888.1-3"/>
    <property type="match status" value="1"/>
</dbReference>
<dbReference type="PANTHER" id="PTHR47275">
    <property type="entry name" value="NAD(P)H-QUINONE OXIDOREDUCTASE SUBUNIT I, CHLOROPLASTIC"/>
    <property type="match status" value="1"/>
</dbReference>
<dbReference type="PANTHER" id="PTHR47275:SF1">
    <property type="entry name" value="NAD(P)H-QUINONE OXIDOREDUCTASE SUBUNIT I, CHLOROPLASTIC"/>
    <property type="match status" value="1"/>
</dbReference>
<dbReference type="Pfam" id="PF12838">
    <property type="entry name" value="Fer4_7"/>
    <property type="match status" value="1"/>
</dbReference>
<dbReference type="SUPFAM" id="SSF54862">
    <property type="entry name" value="4Fe-4S ferredoxins"/>
    <property type="match status" value="1"/>
</dbReference>
<dbReference type="PROSITE" id="PS00198">
    <property type="entry name" value="4FE4S_FER_1"/>
    <property type="match status" value="2"/>
</dbReference>
<dbReference type="PROSITE" id="PS51379">
    <property type="entry name" value="4FE4S_FER_2"/>
    <property type="match status" value="2"/>
</dbReference>
<reference key="1">
    <citation type="journal article" date="1991" name="Plant Cell Physiol.">
        <title>Structure of a co-transcribed gene cluster, ndh1-frxB-ndh6-ndh4L, cloned from the filamentous cyanobacterium Plectonema boryanum.</title>
        <authorList>
            <person name="Takahashi Y."/>
            <person name="Shonai F."/>
            <person name="Fujita Y."/>
            <person name="Kohchi T."/>
            <person name="Ohyama K."/>
            <person name="Matsubara H."/>
        </authorList>
    </citation>
    <scope>NUCLEOTIDE SEQUENCE [GENOMIC DNA]</scope>
    <source>
        <strain>ATCC 27894 / CCAP 1463/1 / IAM M-101 / PCC 6306 / UTEX 581</strain>
    </source>
</reference>
<gene>
    <name type="primary">ndhI</name>
    <name type="synonym">frxB</name>
</gene>
<evidence type="ECO:0000250" key="1"/>
<evidence type="ECO:0000256" key="2">
    <source>
        <dbReference type="SAM" id="MobiDB-lite"/>
    </source>
</evidence>
<evidence type="ECO:0000305" key="3"/>
<protein>
    <recommendedName>
        <fullName>NAD(P)H-quinone oxidoreductase subunit I</fullName>
        <ecNumber>7.1.1.-</ecNumber>
    </recommendedName>
    <alternativeName>
        <fullName>NAD(P)H dehydrogenase I subunit I</fullName>
    </alternativeName>
    <alternativeName>
        <fullName>NDH-1 subunit I</fullName>
        <shortName>NDH-I</shortName>
    </alternativeName>
</protein>
<name>NDHI_LEPBY</name>
<sequence>MMKFLKQVGDYTKEAIQAGKYIGQGLSVTFDHMRRRPITVQYPYEKLILSERFRGRIHFEFDKCIACEVCVRVCPINLPVVDWEFNKETKKKKLNHYSIDFGVCIFCGNCVEYCPTNCLSMTEEYELSTYDRHELNYDNVALGRLPYKVTNDPMVTPLREFAYLPKGAIDPHDLPAGSRRAGLRPEEIVEQSQQ</sequence>
<feature type="chain" id="PRO_0000118716" description="NAD(P)H-quinone oxidoreductase subunit I">
    <location>
        <begin position="1"/>
        <end position="194"/>
    </location>
</feature>
<feature type="domain" description="4Fe-4S ferredoxin-type 1">
    <location>
        <begin position="55"/>
        <end position="84"/>
    </location>
</feature>
<feature type="domain" description="4Fe-4S ferredoxin-type 2">
    <location>
        <begin position="95"/>
        <end position="124"/>
    </location>
</feature>
<feature type="region of interest" description="Disordered" evidence="2">
    <location>
        <begin position="173"/>
        <end position="194"/>
    </location>
</feature>
<feature type="binding site" evidence="1">
    <location>
        <position position="64"/>
    </location>
    <ligand>
        <name>[4Fe-4S] cluster</name>
        <dbReference type="ChEBI" id="CHEBI:49883"/>
        <label>1</label>
    </ligand>
</feature>
<feature type="binding site" evidence="1">
    <location>
        <position position="67"/>
    </location>
    <ligand>
        <name>[4Fe-4S] cluster</name>
        <dbReference type="ChEBI" id="CHEBI:49883"/>
        <label>1</label>
    </ligand>
</feature>
<feature type="binding site" evidence="1">
    <location>
        <position position="70"/>
    </location>
    <ligand>
        <name>[4Fe-4S] cluster</name>
        <dbReference type="ChEBI" id="CHEBI:49883"/>
        <label>1</label>
    </ligand>
</feature>
<feature type="binding site" evidence="1">
    <location>
        <position position="74"/>
    </location>
    <ligand>
        <name>[4Fe-4S] cluster</name>
        <dbReference type="ChEBI" id="CHEBI:49883"/>
        <label>2</label>
    </ligand>
</feature>
<feature type="binding site" evidence="1">
    <location>
        <position position="104"/>
    </location>
    <ligand>
        <name>[4Fe-4S] cluster</name>
        <dbReference type="ChEBI" id="CHEBI:49883"/>
        <label>2</label>
    </ligand>
</feature>
<feature type="binding site" evidence="1">
    <location>
        <position position="107"/>
    </location>
    <ligand>
        <name>[4Fe-4S] cluster</name>
        <dbReference type="ChEBI" id="CHEBI:49883"/>
        <label>2</label>
    </ligand>
</feature>
<feature type="binding site" evidence="1">
    <location>
        <position position="110"/>
    </location>
    <ligand>
        <name>[4Fe-4S] cluster</name>
        <dbReference type="ChEBI" id="CHEBI:49883"/>
        <label>2</label>
    </ligand>
</feature>
<feature type="binding site" evidence="1">
    <location>
        <position position="114"/>
    </location>
    <ligand>
        <name>[4Fe-4S] cluster</name>
        <dbReference type="ChEBI" id="CHEBI:49883"/>
        <label>1</label>
    </ligand>
</feature>
<organism>
    <name type="scientific">Leptolyngbya boryana</name>
    <name type="common">Plectonema boryanum</name>
    <dbReference type="NCBI Taxonomy" id="1184"/>
    <lineage>
        <taxon>Bacteria</taxon>
        <taxon>Bacillati</taxon>
        <taxon>Cyanobacteriota</taxon>
        <taxon>Cyanophyceae</taxon>
        <taxon>Leptolyngbyales</taxon>
        <taxon>Leptolyngbyaceae</taxon>
        <taxon>Leptolyngbya group</taxon>
        <taxon>Leptolyngbya</taxon>
    </lineage>
</organism>
<keyword id="KW-0004">4Fe-4S</keyword>
<keyword id="KW-0408">Iron</keyword>
<keyword id="KW-0411">Iron-sulfur</keyword>
<keyword id="KW-0472">Membrane</keyword>
<keyword id="KW-0479">Metal-binding</keyword>
<keyword id="KW-0520">NAD</keyword>
<keyword id="KW-0521">NADP</keyword>
<keyword id="KW-0618">Plastoquinone</keyword>
<keyword id="KW-0874">Quinone</keyword>
<keyword id="KW-0677">Repeat</keyword>
<keyword id="KW-0793">Thylakoid</keyword>
<keyword id="KW-1278">Translocase</keyword>
<accession>Q00236</accession>
<proteinExistence type="inferred from homology"/>